<dbReference type="EMBL" id="AM398681">
    <property type="protein sequence ID" value="CAL44027.1"/>
    <property type="molecule type" value="Genomic_DNA"/>
</dbReference>
<dbReference type="RefSeq" id="WP_011964065.1">
    <property type="nucleotide sequence ID" value="NC_009613.3"/>
</dbReference>
<dbReference type="RefSeq" id="YP_001296829.1">
    <property type="nucleotide sequence ID" value="NC_009613.3"/>
</dbReference>
<dbReference type="SMR" id="A6H103"/>
<dbReference type="STRING" id="402612.FP1961"/>
<dbReference type="EnsemblBacteria" id="CAL44027">
    <property type="protein sequence ID" value="CAL44027"/>
    <property type="gene ID" value="FP1961"/>
</dbReference>
<dbReference type="GeneID" id="66551856"/>
<dbReference type="KEGG" id="fps:FP1961"/>
<dbReference type="PATRIC" id="fig|402612.5.peg.1986"/>
<dbReference type="eggNOG" id="COG1160">
    <property type="taxonomic scope" value="Bacteria"/>
</dbReference>
<dbReference type="HOGENOM" id="CLU_016077_6_2_10"/>
<dbReference type="OrthoDB" id="9805918at2"/>
<dbReference type="Proteomes" id="UP000006394">
    <property type="component" value="Chromosome"/>
</dbReference>
<dbReference type="GO" id="GO:0005525">
    <property type="term" value="F:GTP binding"/>
    <property type="evidence" value="ECO:0007669"/>
    <property type="project" value="UniProtKB-UniRule"/>
</dbReference>
<dbReference type="GO" id="GO:0043022">
    <property type="term" value="F:ribosome binding"/>
    <property type="evidence" value="ECO:0007669"/>
    <property type="project" value="TreeGrafter"/>
</dbReference>
<dbReference type="GO" id="GO:0042254">
    <property type="term" value="P:ribosome biogenesis"/>
    <property type="evidence" value="ECO:0007669"/>
    <property type="project" value="UniProtKB-KW"/>
</dbReference>
<dbReference type="CDD" id="cd01894">
    <property type="entry name" value="EngA1"/>
    <property type="match status" value="1"/>
</dbReference>
<dbReference type="CDD" id="cd01895">
    <property type="entry name" value="EngA2"/>
    <property type="match status" value="1"/>
</dbReference>
<dbReference type="FunFam" id="3.30.300.20:FF:000004">
    <property type="entry name" value="GTPase Der"/>
    <property type="match status" value="1"/>
</dbReference>
<dbReference type="FunFam" id="3.40.50.300:FF:000040">
    <property type="entry name" value="GTPase Der"/>
    <property type="match status" value="1"/>
</dbReference>
<dbReference type="FunFam" id="3.40.50.300:FF:000953">
    <property type="entry name" value="GTPase Der"/>
    <property type="match status" value="1"/>
</dbReference>
<dbReference type="Gene3D" id="3.30.300.20">
    <property type="match status" value="1"/>
</dbReference>
<dbReference type="Gene3D" id="3.40.50.300">
    <property type="entry name" value="P-loop containing nucleotide triphosphate hydrolases"/>
    <property type="match status" value="2"/>
</dbReference>
<dbReference type="HAMAP" id="MF_00195">
    <property type="entry name" value="GTPase_Der"/>
    <property type="match status" value="1"/>
</dbReference>
<dbReference type="InterPro" id="IPR031166">
    <property type="entry name" value="G_ENGA"/>
</dbReference>
<dbReference type="InterPro" id="IPR006073">
    <property type="entry name" value="GTP-bd"/>
</dbReference>
<dbReference type="InterPro" id="IPR016484">
    <property type="entry name" value="GTPase_Der"/>
</dbReference>
<dbReference type="InterPro" id="IPR032859">
    <property type="entry name" value="KH_dom-like"/>
</dbReference>
<dbReference type="InterPro" id="IPR015946">
    <property type="entry name" value="KH_dom-like_a/b"/>
</dbReference>
<dbReference type="InterPro" id="IPR027417">
    <property type="entry name" value="P-loop_NTPase"/>
</dbReference>
<dbReference type="InterPro" id="IPR005225">
    <property type="entry name" value="Small_GTP-bd"/>
</dbReference>
<dbReference type="NCBIfam" id="TIGR03594">
    <property type="entry name" value="GTPase_EngA"/>
    <property type="match status" value="1"/>
</dbReference>
<dbReference type="NCBIfam" id="TIGR00231">
    <property type="entry name" value="small_GTP"/>
    <property type="match status" value="2"/>
</dbReference>
<dbReference type="PANTHER" id="PTHR43834">
    <property type="entry name" value="GTPASE DER"/>
    <property type="match status" value="1"/>
</dbReference>
<dbReference type="PANTHER" id="PTHR43834:SF6">
    <property type="entry name" value="GTPASE DER"/>
    <property type="match status" value="1"/>
</dbReference>
<dbReference type="Pfam" id="PF14714">
    <property type="entry name" value="KH_dom-like"/>
    <property type="match status" value="1"/>
</dbReference>
<dbReference type="Pfam" id="PF01926">
    <property type="entry name" value="MMR_HSR1"/>
    <property type="match status" value="2"/>
</dbReference>
<dbReference type="PIRSF" id="PIRSF006485">
    <property type="entry name" value="GTP-binding_EngA"/>
    <property type="match status" value="1"/>
</dbReference>
<dbReference type="PRINTS" id="PR00326">
    <property type="entry name" value="GTP1OBG"/>
</dbReference>
<dbReference type="SUPFAM" id="SSF52540">
    <property type="entry name" value="P-loop containing nucleoside triphosphate hydrolases"/>
    <property type="match status" value="2"/>
</dbReference>
<dbReference type="PROSITE" id="PS51712">
    <property type="entry name" value="G_ENGA"/>
    <property type="match status" value="2"/>
</dbReference>
<accession>A6H103</accession>
<evidence type="ECO:0000255" key="1">
    <source>
        <dbReference type="HAMAP-Rule" id="MF_00195"/>
    </source>
</evidence>
<protein>
    <recommendedName>
        <fullName evidence="1">GTPase Der</fullName>
    </recommendedName>
    <alternativeName>
        <fullName evidence="1">GTP-binding protein EngA</fullName>
    </alternativeName>
</protein>
<proteinExistence type="inferred from homology"/>
<reference key="1">
    <citation type="journal article" date="2007" name="Nat. Biotechnol.">
        <title>Complete genome sequence of the fish pathogen Flavobacterium psychrophilum.</title>
        <authorList>
            <person name="Duchaud E."/>
            <person name="Boussaha M."/>
            <person name="Loux V."/>
            <person name="Bernardet J.-F."/>
            <person name="Michel C."/>
            <person name="Kerouault B."/>
            <person name="Mondot S."/>
            <person name="Nicolas P."/>
            <person name="Bossy R."/>
            <person name="Caron C."/>
            <person name="Bessieres P."/>
            <person name="Gibrat J.-F."/>
            <person name="Claverol S."/>
            <person name="Dumetz F."/>
            <person name="Le Henaff M."/>
            <person name="Benmansour A."/>
        </authorList>
    </citation>
    <scope>NUCLEOTIDE SEQUENCE [LARGE SCALE GENOMIC DNA]</scope>
    <source>
        <strain>ATCC 49511 / DSM 21280 / CIP 103535 / JIP02/86</strain>
    </source>
</reference>
<feature type="chain" id="PRO_1000011622" description="GTPase Der">
    <location>
        <begin position="1"/>
        <end position="436"/>
    </location>
</feature>
<feature type="domain" description="EngA-type G 1">
    <location>
        <begin position="3"/>
        <end position="167"/>
    </location>
</feature>
<feature type="domain" description="EngA-type G 2">
    <location>
        <begin position="177"/>
        <end position="352"/>
    </location>
</feature>
<feature type="domain" description="KH-like" evidence="1">
    <location>
        <begin position="353"/>
        <end position="436"/>
    </location>
</feature>
<feature type="binding site" evidence="1">
    <location>
        <begin position="9"/>
        <end position="16"/>
    </location>
    <ligand>
        <name>GTP</name>
        <dbReference type="ChEBI" id="CHEBI:37565"/>
        <label>1</label>
    </ligand>
</feature>
<feature type="binding site" evidence="1">
    <location>
        <begin position="56"/>
        <end position="60"/>
    </location>
    <ligand>
        <name>GTP</name>
        <dbReference type="ChEBI" id="CHEBI:37565"/>
        <label>1</label>
    </ligand>
</feature>
<feature type="binding site" evidence="1">
    <location>
        <begin position="119"/>
        <end position="122"/>
    </location>
    <ligand>
        <name>GTP</name>
        <dbReference type="ChEBI" id="CHEBI:37565"/>
        <label>1</label>
    </ligand>
</feature>
<feature type="binding site" evidence="1">
    <location>
        <begin position="183"/>
        <end position="190"/>
    </location>
    <ligand>
        <name>GTP</name>
        <dbReference type="ChEBI" id="CHEBI:37565"/>
        <label>2</label>
    </ligand>
</feature>
<feature type="binding site" evidence="1">
    <location>
        <begin position="230"/>
        <end position="234"/>
    </location>
    <ligand>
        <name>GTP</name>
        <dbReference type="ChEBI" id="CHEBI:37565"/>
        <label>2</label>
    </ligand>
</feature>
<feature type="binding site" evidence="1">
    <location>
        <begin position="295"/>
        <end position="298"/>
    </location>
    <ligand>
        <name>GTP</name>
        <dbReference type="ChEBI" id="CHEBI:37565"/>
        <label>2</label>
    </ligand>
</feature>
<name>DER_FLAPJ</name>
<organism>
    <name type="scientific">Flavobacterium psychrophilum (strain ATCC 49511 / DSM 21280 / CIP 103535 / JIP02/86)</name>
    <dbReference type="NCBI Taxonomy" id="402612"/>
    <lineage>
        <taxon>Bacteria</taxon>
        <taxon>Pseudomonadati</taxon>
        <taxon>Bacteroidota</taxon>
        <taxon>Flavobacteriia</taxon>
        <taxon>Flavobacteriales</taxon>
        <taxon>Flavobacteriaceae</taxon>
        <taxon>Flavobacterium</taxon>
    </lineage>
</organism>
<keyword id="KW-0342">GTP-binding</keyword>
<keyword id="KW-0547">Nucleotide-binding</keyword>
<keyword id="KW-1185">Reference proteome</keyword>
<keyword id="KW-0677">Repeat</keyword>
<keyword id="KW-0690">Ribosome biogenesis</keyword>
<sequence>MNNIVAIVGRPNVGKSTLFNRLIQRREAIVDSVSGVTRDRNYGKSEWNGKEFSVIDTGGYIRGSDDIFEGEIRKQVELAIDESDVIIFVVDVEEGITPMDDAVAKMLRKVTKPVLLAVNKVDNAMREKDAVEFYNLGLGEYYTFASISGSGTGDLLDALIDAFPIKPLPTQEEIVLPRFAVVGRPNAGKSSFINALIGKERFMVTDIAGTTRDSIDTKYDRFGFEFNLVDTAGIRRKAKVKEDLEFYSVMRSVRAIEHADVCILIIDATRGFEGQDQSIFWLAEKNRKGVVILVNKWDLVEKDTMSTRDYEAKIREELMPFVDVPILFVSALTKQRLLKALEATVQVYENRQQRISTSKFNEYMLKIIENHPPPALKGKFVKIKYCMQLPTPTPQFVFFANLPQYVKDAYKRFLENKIRENWDFEGVPIDIYIREK</sequence>
<gene>
    <name evidence="1" type="primary">der</name>
    <name type="synonym">engA</name>
    <name type="ordered locus">FP1961</name>
</gene>
<comment type="function">
    <text evidence="1">GTPase that plays an essential role in the late steps of ribosome biogenesis.</text>
</comment>
<comment type="subunit">
    <text evidence="1">Associates with the 50S ribosomal subunit.</text>
</comment>
<comment type="similarity">
    <text evidence="1">Belongs to the TRAFAC class TrmE-Era-EngA-EngB-Septin-like GTPase superfamily. EngA (Der) GTPase family.</text>
</comment>